<feature type="chain" id="PRO_0000456196" description="Lysine-specific demethylase JMJ31">
    <location>
        <begin position="1"/>
        <end position="549"/>
    </location>
</feature>
<feature type="domain" description="JmjC" evidence="3">
    <location>
        <begin position="125"/>
        <end position="296"/>
    </location>
</feature>
<feature type="binding site" evidence="3">
    <location>
        <position position="184"/>
    </location>
    <ligand>
        <name>Fe cation</name>
        <dbReference type="ChEBI" id="CHEBI:24875"/>
        <note>catalytic</note>
    </ligand>
</feature>
<feature type="binding site" evidence="3">
    <location>
        <position position="186"/>
    </location>
    <ligand>
        <name>Fe cation</name>
        <dbReference type="ChEBI" id="CHEBI:24875"/>
        <note>catalytic</note>
    </ligand>
</feature>
<feature type="binding site" evidence="3">
    <location>
        <position position="266"/>
    </location>
    <ligand>
        <name>Fe cation</name>
        <dbReference type="ChEBI" id="CHEBI:24875"/>
        <note>catalytic</note>
    </ligand>
</feature>
<proteinExistence type="evidence at transcript level"/>
<accession>F4K2M8</accession>
<accession>Q8GZ41</accession>
<dbReference type="EC" id="1.14.11.-" evidence="1"/>
<dbReference type="EMBL" id="AF296838">
    <property type="status" value="NOT_ANNOTATED_CDS"/>
    <property type="molecule type" value="Genomic_DNA"/>
</dbReference>
<dbReference type="EMBL" id="CP002688">
    <property type="protein sequence ID" value="AED92755.1"/>
    <property type="molecule type" value="Genomic_DNA"/>
</dbReference>
<dbReference type="EMBL" id="AK117223">
    <property type="protein sequence ID" value="BAC41899.1"/>
    <property type="status" value="ALT_FRAME"/>
    <property type="molecule type" value="mRNA"/>
</dbReference>
<dbReference type="RefSeq" id="NP_001190341.1">
    <property type="nucleotide sequence ID" value="NM_001203412.2"/>
</dbReference>
<dbReference type="SMR" id="F4K2M8"/>
<dbReference type="FunCoup" id="F4K2M8">
    <property type="interactions" value="789"/>
</dbReference>
<dbReference type="STRING" id="3702.F4K2M8"/>
<dbReference type="PaxDb" id="3702-AT5G19840.2"/>
<dbReference type="ProteomicsDB" id="201586"/>
<dbReference type="EnsemblPlants" id="AT5G19840.2">
    <property type="protein sequence ID" value="AT5G19840.2"/>
    <property type="gene ID" value="AT5G19840"/>
</dbReference>
<dbReference type="GeneID" id="832104"/>
<dbReference type="Gramene" id="AT5G19840.2">
    <property type="protein sequence ID" value="AT5G19840.2"/>
    <property type="gene ID" value="AT5G19840"/>
</dbReference>
<dbReference type="KEGG" id="ath:AT5G19840"/>
<dbReference type="Araport" id="AT5G19840"/>
<dbReference type="TAIR" id="AT5G19840"/>
<dbReference type="eggNOG" id="ENOG502QT8Y">
    <property type="taxonomic scope" value="Eukaryota"/>
</dbReference>
<dbReference type="InParanoid" id="F4K2M8"/>
<dbReference type="PRO" id="PR:F4K2M8"/>
<dbReference type="Proteomes" id="UP000006548">
    <property type="component" value="Chromosome 5"/>
</dbReference>
<dbReference type="ExpressionAtlas" id="F4K2M8">
    <property type="expression patterns" value="baseline and differential"/>
</dbReference>
<dbReference type="GO" id="GO:0005634">
    <property type="term" value="C:nucleus"/>
    <property type="evidence" value="ECO:0007669"/>
    <property type="project" value="UniProtKB-SubCell"/>
</dbReference>
<dbReference type="GO" id="GO:0046872">
    <property type="term" value="F:metal ion binding"/>
    <property type="evidence" value="ECO:0007669"/>
    <property type="project" value="UniProtKB-KW"/>
</dbReference>
<dbReference type="GO" id="GO:0016491">
    <property type="term" value="F:oxidoreductase activity"/>
    <property type="evidence" value="ECO:0007669"/>
    <property type="project" value="UniProtKB-KW"/>
</dbReference>
<dbReference type="FunFam" id="2.60.120.650:FF:000053">
    <property type="entry name" value="2-oxoglutarate (2OG) and Fe(II)-dependent oxygenase superfamily protein"/>
    <property type="match status" value="1"/>
</dbReference>
<dbReference type="Gene3D" id="2.60.120.650">
    <property type="entry name" value="Cupin"/>
    <property type="match status" value="1"/>
</dbReference>
<dbReference type="InterPro" id="IPR041667">
    <property type="entry name" value="Cupin_8"/>
</dbReference>
<dbReference type="InterPro" id="IPR003347">
    <property type="entry name" value="JmjC_dom"/>
</dbReference>
<dbReference type="PANTHER" id="PTHR12461">
    <property type="entry name" value="HYPOXIA-INDUCIBLE FACTOR 1 ALPHA INHIBITOR-RELATED"/>
    <property type="match status" value="1"/>
</dbReference>
<dbReference type="PANTHER" id="PTHR12461:SF102">
    <property type="entry name" value="LYSINE-SPECIFIC DEMETHYLASE JMJ31"/>
    <property type="match status" value="1"/>
</dbReference>
<dbReference type="Pfam" id="PF13621">
    <property type="entry name" value="Cupin_8"/>
    <property type="match status" value="1"/>
</dbReference>
<dbReference type="SMART" id="SM00558">
    <property type="entry name" value="JmjC"/>
    <property type="match status" value="1"/>
</dbReference>
<dbReference type="SUPFAM" id="SSF51197">
    <property type="entry name" value="Clavaminate synthase-like"/>
    <property type="match status" value="1"/>
</dbReference>
<dbReference type="PROSITE" id="PS51184">
    <property type="entry name" value="JMJC"/>
    <property type="match status" value="1"/>
</dbReference>
<protein>
    <recommendedName>
        <fullName evidence="5">Lysine-specific demethylase JMJ31</fullName>
        <ecNumber evidence="1">1.14.11.-</ecNumber>
    </recommendedName>
    <alternativeName>
        <fullName evidence="5">Jumonji domain-containing protein 31</fullName>
        <shortName evidence="5">AtJMJ31</shortName>
        <shortName evidence="5">Protein JUMONJI 31</shortName>
    </alternativeName>
    <alternativeName>
        <fullName evidence="5">Lysine-specific histone demethylase JMJ31</fullName>
    </alternativeName>
    <alternativeName>
        <fullName evidence="6">[histone H3]-trimethyl-L-lysine monodemethylase JMJ31</fullName>
    </alternativeName>
</protein>
<keyword id="KW-0408">Iron</keyword>
<keyword id="KW-0479">Metal-binding</keyword>
<keyword id="KW-0539">Nucleus</keyword>
<keyword id="KW-0560">Oxidoreductase</keyword>
<keyword id="KW-1185">Reference proteome</keyword>
<sequence length="549" mass="61906">MPTGCEFPMIKTFENALTAADFESTVELTNFPAVFRGCASVWDAYSKWNPFNSGLDYLEERAGSVEVEAMLSRTAPVFNGDIRSHERVSLPFSDFIRFCKQHMRGKGNGSGVDAKSADLNPMCEDYRPGQIYLAQFPILNDEKEEKVLLKILRQDIQTPTFLDAKSLSSINFWMNSAEARSSTHYDPHHNLLCVVSGRKKVVLWPPSASPSLYPMPIYGEASNHSSVGLENPNLSDYPRAEHSLKQSQEITLNAGDAVFIPEGWFHQVDSDELTVAVNFWWQSNYMSNMPEHMDSYYLRRITRSLLVSKPSSTDLRHLSEHIDQSRIEMAEGGNDNIGNESIKKGLSTLHEKASLHDLDPSASQALHDLISLVHDHVNAVDTSKGLQHTSPSCSEGGEKSKFLVNAMSCLEDDRVAHLLWNLEASRLRDVLLAMALELSYLKLLVKMEIFVLVLHKIFETLEALILHMLSPIAAEVLTQKFDEIDQQTGEEDRTQFFREFYSAFDDEAAAMDIILSRKEAFAFQVCSLASLCRLRTYHKLKGEKFSASY</sequence>
<gene>
    <name evidence="5" type="primary">JMJ31</name>
    <name evidence="7" type="ordered locus">At5g19840</name>
    <name evidence="8" type="ORF">T29J13.260</name>
</gene>
<organism>
    <name type="scientific">Arabidopsis thaliana</name>
    <name type="common">Mouse-ear cress</name>
    <dbReference type="NCBI Taxonomy" id="3702"/>
    <lineage>
        <taxon>Eukaryota</taxon>
        <taxon>Viridiplantae</taxon>
        <taxon>Streptophyta</taxon>
        <taxon>Embryophyta</taxon>
        <taxon>Tracheophyta</taxon>
        <taxon>Spermatophyta</taxon>
        <taxon>Magnoliopsida</taxon>
        <taxon>eudicotyledons</taxon>
        <taxon>Gunneridae</taxon>
        <taxon>Pentapetalae</taxon>
        <taxon>rosids</taxon>
        <taxon>malvids</taxon>
        <taxon>Brassicales</taxon>
        <taxon>Brassicaceae</taxon>
        <taxon>Camelineae</taxon>
        <taxon>Arabidopsis</taxon>
    </lineage>
</organism>
<reference key="1">
    <citation type="journal article" date="2000" name="Nature">
        <title>Sequence and analysis of chromosome 5 of the plant Arabidopsis thaliana.</title>
        <authorList>
            <person name="Tabata S."/>
            <person name="Kaneko T."/>
            <person name="Nakamura Y."/>
            <person name="Kotani H."/>
            <person name="Kato T."/>
            <person name="Asamizu E."/>
            <person name="Miyajima N."/>
            <person name="Sasamoto S."/>
            <person name="Kimura T."/>
            <person name="Hosouchi T."/>
            <person name="Kawashima K."/>
            <person name="Kohara M."/>
            <person name="Matsumoto M."/>
            <person name="Matsuno A."/>
            <person name="Muraki A."/>
            <person name="Nakayama S."/>
            <person name="Nakazaki N."/>
            <person name="Naruo K."/>
            <person name="Okumura S."/>
            <person name="Shinpo S."/>
            <person name="Takeuchi C."/>
            <person name="Wada T."/>
            <person name="Watanabe A."/>
            <person name="Yamada M."/>
            <person name="Yasuda M."/>
            <person name="Sato S."/>
            <person name="de la Bastide M."/>
            <person name="Huang E."/>
            <person name="Spiegel L."/>
            <person name="Gnoj L."/>
            <person name="O'Shaughnessy A."/>
            <person name="Preston R."/>
            <person name="Habermann K."/>
            <person name="Murray J."/>
            <person name="Johnson D."/>
            <person name="Rohlfing T."/>
            <person name="Nelson J."/>
            <person name="Stoneking T."/>
            <person name="Pepin K."/>
            <person name="Spieth J."/>
            <person name="Sekhon M."/>
            <person name="Armstrong J."/>
            <person name="Becker M."/>
            <person name="Belter E."/>
            <person name="Cordum H."/>
            <person name="Cordes M."/>
            <person name="Courtney L."/>
            <person name="Courtney W."/>
            <person name="Dante M."/>
            <person name="Du H."/>
            <person name="Edwards J."/>
            <person name="Fryman J."/>
            <person name="Haakensen B."/>
            <person name="Lamar E."/>
            <person name="Latreille P."/>
            <person name="Leonard S."/>
            <person name="Meyer R."/>
            <person name="Mulvaney E."/>
            <person name="Ozersky P."/>
            <person name="Riley A."/>
            <person name="Strowmatt C."/>
            <person name="Wagner-McPherson C."/>
            <person name="Wollam A."/>
            <person name="Yoakum M."/>
            <person name="Bell M."/>
            <person name="Dedhia N."/>
            <person name="Parnell L."/>
            <person name="Shah R."/>
            <person name="Rodriguez M."/>
            <person name="Hoon See L."/>
            <person name="Vil D."/>
            <person name="Baker J."/>
            <person name="Kirchoff K."/>
            <person name="Toth K."/>
            <person name="King L."/>
            <person name="Bahret A."/>
            <person name="Miller B."/>
            <person name="Marra M.A."/>
            <person name="Martienssen R."/>
            <person name="McCombie W.R."/>
            <person name="Wilson R.K."/>
            <person name="Murphy G."/>
            <person name="Bancroft I."/>
            <person name="Volckaert G."/>
            <person name="Wambutt R."/>
            <person name="Duesterhoeft A."/>
            <person name="Stiekema W."/>
            <person name="Pohl T."/>
            <person name="Entian K.-D."/>
            <person name="Terryn N."/>
            <person name="Hartley N."/>
            <person name="Bent E."/>
            <person name="Johnson S."/>
            <person name="Langham S.-A."/>
            <person name="McCullagh B."/>
            <person name="Robben J."/>
            <person name="Grymonprez B."/>
            <person name="Zimmermann W."/>
            <person name="Ramsperger U."/>
            <person name="Wedler H."/>
            <person name="Balke K."/>
            <person name="Wedler E."/>
            <person name="Peters S."/>
            <person name="van Staveren M."/>
            <person name="Dirkse W."/>
            <person name="Mooijman P."/>
            <person name="Klein Lankhorst R."/>
            <person name="Weitzenegger T."/>
            <person name="Bothe G."/>
            <person name="Rose M."/>
            <person name="Hauf J."/>
            <person name="Berneiser S."/>
            <person name="Hempel S."/>
            <person name="Feldpausch M."/>
            <person name="Lamberth S."/>
            <person name="Villarroel R."/>
            <person name="Gielen J."/>
            <person name="Ardiles W."/>
            <person name="Bents O."/>
            <person name="Lemcke K."/>
            <person name="Kolesov G."/>
            <person name="Mayer K.F.X."/>
            <person name="Rudd S."/>
            <person name="Schoof H."/>
            <person name="Schueller C."/>
            <person name="Zaccaria P."/>
            <person name="Mewes H.-W."/>
            <person name="Bevan M."/>
            <person name="Fransz P.F."/>
        </authorList>
    </citation>
    <scope>NUCLEOTIDE SEQUENCE [LARGE SCALE GENOMIC DNA]</scope>
    <source>
        <strain>cv. Columbia</strain>
    </source>
</reference>
<reference key="2">
    <citation type="journal article" date="2017" name="Plant J.">
        <title>Araport11: a complete reannotation of the Arabidopsis thaliana reference genome.</title>
        <authorList>
            <person name="Cheng C.Y."/>
            <person name="Krishnakumar V."/>
            <person name="Chan A.P."/>
            <person name="Thibaud-Nissen F."/>
            <person name="Schobel S."/>
            <person name="Town C.D."/>
        </authorList>
    </citation>
    <scope>GENOME REANNOTATION</scope>
    <source>
        <strain>cv. Columbia</strain>
    </source>
</reference>
<reference key="3">
    <citation type="journal article" date="2002" name="Science">
        <title>Functional annotation of a full-length Arabidopsis cDNA collection.</title>
        <authorList>
            <person name="Seki M."/>
            <person name="Narusaka M."/>
            <person name="Kamiya A."/>
            <person name="Ishida J."/>
            <person name="Satou M."/>
            <person name="Sakurai T."/>
            <person name="Nakajima M."/>
            <person name="Enju A."/>
            <person name="Akiyama K."/>
            <person name="Oono Y."/>
            <person name="Muramatsu M."/>
            <person name="Hayashizaki Y."/>
            <person name="Kawai J."/>
            <person name="Carninci P."/>
            <person name="Itoh M."/>
            <person name="Ishii Y."/>
            <person name="Arakawa T."/>
            <person name="Shibata K."/>
            <person name="Shinagawa A."/>
            <person name="Shinozaki K."/>
        </authorList>
    </citation>
    <scope>NUCLEOTIDE SEQUENCE [LARGE SCALE MRNA]</scope>
    <source>
        <strain>cv. Columbia</strain>
    </source>
</reference>
<reference key="4">
    <citation type="journal article" date="2008" name="J. Integr. Plant Biol.">
        <title>Comparative analysis of JmjC domain-containing proteins reveals the potential histone demethylases in Arabidopsis and rice.</title>
        <authorList>
            <person name="Lu F."/>
            <person name="Li G."/>
            <person name="Cui X."/>
            <person name="Liu C."/>
            <person name="Wang X.-J."/>
            <person name="Cao X."/>
        </authorList>
    </citation>
    <scope>GENE FAMILY</scope>
    <scope>NOMENCLATURE</scope>
    <scope>TISSUE SPECIFICITY</scope>
</reference>
<comment type="function">
    <text evidence="1">May function as histone H3 lysine demethylase and be involved in regulation of gene expression.</text>
</comment>
<comment type="cofactor">
    <cofactor evidence="2">
        <name>Fe(2+)</name>
        <dbReference type="ChEBI" id="CHEBI:29033"/>
    </cofactor>
    <text evidence="2">Binds 1 Fe(2+) ion per subunit.</text>
</comment>
<comment type="subcellular location">
    <subcellularLocation>
        <location evidence="6">Nucleus</location>
    </subcellularLocation>
</comment>
<comment type="tissue specificity">
    <text evidence="4">Mostly expressed in leaves and inflorescences, and, to a lower extent, in roots, siliques and stems.</text>
</comment>
<comment type="similarity">
    <text evidence="6">Belongs to the JARID1 histone demethylase family.</text>
</comment>
<comment type="sequence caution" evidence="6">
    <conflict type="frameshift">
        <sequence resource="EMBL-CDS" id="BAC41899"/>
    </conflict>
</comment>
<evidence type="ECO:0000250" key="1">
    <source>
        <dbReference type="UniProtKB" id="O64752"/>
    </source>
</evidence>
<evidence type="ECO:0000250" key="2">
    <source>
        <dbReference type="UniProtKB" id="Q8GUI6"/>
    </source>
</evidence>
<evidence type="ECO:0000255" key="3">
    <source>
        <dbReference type="PROSITE-ProRule" id="PRU00538"/>
    </source>
</evidence>
<evidence type="ECO:0000269" key="4">
    <source>
    </source>
</evidence>
<evidence type="ECO:0000303" key="5">
    <source>
    </source>
</evidence>
<evidence type="ECO:0000305" key="6"/>
<evidence type="ECO:0000312" key="7">
    <source>
        <dbReference type="Araport" id="AT5G19840"/>
    </source>
</evidence>
<evidence type="ECO:0000312" key="8">
    <source>
        <dbReference type="EMBL" id="AF296838"/>
    </source>
</evidence>
<name>JMJ31_ARATH</name>